<proteinExistence type="inferred from homology"/>
<accession>Q54EP7</accession>
<protein>
    <recommendedName>
        <fullName>Signal recognition particle subunit SRP72</fullName>
    </recommendedName>
    <alternativeName>
        <fullName>Signal recognition particle 72 kDa protein homolog</fullName>
    </alternativeName>
</protein>
<reference key="1">
    <citation type="journal article" date="2005" name="Nature">
        <title>The genome of the social amoeba Dictyostelium discoideum.</title>
        <authorList>
            <person name="Eichinger L."/>
            <person name="Pachebat J.A."/>
            <person name="Gloeckner G."/>
            <person name="Rajandream M.A."/>
            <person name="Sucgang R."/>
            <person name="Berriman M."/>
            <person name="Song J."/>
            <person name="Olsen R."/>
            <person name="Szafranski K."/>
            <person name="Xu Q."/>
            <person name="Tunggal B."/>
            <person name="Kummerfeld S."/>
            <person name="Madera M."/>
            <person name="Konfortov B.A."/>
            <person name="Rivero F."/>
            <person name="Bankier A.T."/>
            <person name="Lehmann R."/>
            <person name="Hamlin N."/>
            <person name="Davies R."/>
            <person name="Gaudet P."/>
            <person name="Fey P."/>
            <person name="Pilcher K."/>
            <person name="Chen G."/>
            <person name="Saunders D."/>
            <person name="Sodergren E.J."/>
            <person name="Davis P."/>
            <person name="Kerhornou A."/>
            <person name="Nie X."/>
            <person name="Hall N."/>
            <person name="Anjard C."/>
            <person name="Hemphill L."/>
            <person name="Bason N."/>
            <person name="Farbrother P."/>
            <person name="Desany B."/>
            <person name="Just E."/>
            <person name="Morio T."/>
            <person name="Rost R."/>
            <person name="Churcher C.M."/>
            <person name="Cooper J."/>
            <person name="Haydock S."/>
            <person name="van Driessche N."/>
            <person name="Cronin A."/>
            <person name="Goodhead I."/>
            <person name="Muzny D.M."/>
            <person name="Mourier T."/>
            <person name="Pain A."/>
            <person name="Lu M."/>
            <person name="Harper D."/>
            <person name="Lindsay R."/>
            <person name="Hauser H."/>
            <person name="James K.D."/>
            <person name="Quiles M."/>
            <person name="Madan Babu M."/>
            <person name="Saito T."/>
            <person name="Buchrieser C."/>
            <person name="Wardroper A."/>
            <person name="Felder M."/>
            <person name="Thangavelu M."/>
            <person name="Johnson D."/>
            <person name="Knights A."/>
            <person name="Loulseged H."/>
            <person name="Mungall K.L."/>
            <person name="Oliver K."/>
            <person name="Price C."/>
            <person name="Quail M.A."/>
            <person name="Urushihara H."/>
            <person name="Hernandez J."/>
            <person name="Rabbinowitsch E."/>
            <person name="Steffen D."/>
            <person name="Sanders M."/>
            <person name="Ma J."/>
            <person name="Kohara Y."/>
            <person name="Sharp S."/>
            <person name="Simmonds M.N."/>
            <person name="Spiegler S."/>
            <person name="Tivey A."/>
            <person name="Sugano S."/>
            <person name="White B."/>
            <person name="Walker D."/>
            <person name="Woodward J.R."/>
            <person name="Winckler T."/>
            <person name="Tanaka Y."/>
            <person name="Shaulsky G."/>
            <person name="Schleicher M."/>
            <person name="Weinstock G.M."/>
            <person name="Rosenthal A."/>
            <person name="Cox E.C."/>
            <person name="Chisholm R.L."/>
            <person name="Gibbs R.A."/>
            <person name="Loomis W.F."/>
            <person name="Platzer M."/>
            <person name="Kay R.R."/>
            <person name="Williams J.G."/>
            <person name="Dear P.H."/>
            <person name="Noegel A.A."/>
            <person name="Barrell B.G."/>
            <person name="Kuspa A."/>
        </authorList>
    </citation>
    <scope>NUCLEOTIDE SEQUENCE [LARGE SCALE GENOMIC DNA]</scope>
    <source>
        <strain>AX4</strain>
    </source>
</reference>
<name>SRP72_DICDI</name>
<keyword id="KW-0963">Cytoplasm</keyword>
<keyword id="KW-0256">Endoplasmic reticulum</keyword>
<keyword id="KW-1185">Reference proteome</keyword>
<keyword id="KW-0677">Repeat</keyword>
<keyword id="KW-0687">Ribonucleoprotein</keyword>
<keyword id="KW-0694">RNA-binding</keyword>
<keyword id="KW-0733">Signal recognition particle</keyword>
<keyword id="KW-0802">TPR repeat</keyword>
<sequence>MSKDTTVSLEQLFKELDEYIINSQFKKAIRVCNKILSVNGNDSEAFQCKVICLMQLSNFTEAIECFKKPEQIQSMQFEYSYCLYSTAKYQEALTQLEKQSSKETKSLELEAQIYYKLENYQKTISIYESLLSKPGYSDSIEFITNLCAVYLDAGKFNECQELLNKNKSQQTKTHELAFNSACLAISKNDTKTAETQLKLAKKICTDSLKKDGFSEEEIKEEQTSIDVQLGYVQQICGNLEKSLEQYQNVLEQQVGDSATLVATNNSISVRSILQSDQWSTQPKEYTHAMDSLKSLLTEAESTRLNSKQKKVINYNLCLLLVQLKKVSQCEELIKTLKSKYGQQQQQVDTSFVEDLDIIQVSLLIKEKKFKDAEKLLLKNNTTTGSIKSQLLLAQIYLLDNNNVAKALNVLEKLDSSVSLRPGIVATKVALYEKSGDLEKAVNSLDDLISIFDKQKKSEKDEEIYVNLLKASGNFKLKHHKYREASDMFDRVLKINPNDLIALPSYIVATSHFDPSLSQKYEGKLPNIKFESKIDIDLIEKYGLTFEKKLNLNEDSNSSSPTTTTTTTTKSTKPTATEVVKIKKSKKKLPKVMKPNYVPDPGRWLPKWQRANAKAARSKKNKDIIKGPQGIASASQTASLFVQESKNTNTNNNNTQSSKSEKPRNIHKKKSKK</sequence>
<organism>
    <name type="scientific">Dictyostelium discoideum</name>
    <name type="common">Social amoeba</name>
    <dbReference type="NCBI Taxonomy" id="44689"/>
    <lineage>
        <taxon>Eukaryota</taxon>
        <taxon>Amoebozoa</taxon>
        <taxon>Evosea</taxon>
        <taxon>Eumycetozoa</taxon>
        <taxon>Dictyostelia</taxon>
        <taxon>Dictyosteliales</taxon>
        <taxon>Dictyosteliaceae</taxon>
        <taxon>Dictyostelium</taxon>
    </lineage>
</organism>
<feature type="chain" id="PRO_0000328095" description="Signal recognition particle subunit SRP72">
    <location>
        <begin position="1"/>
        <end position="672"/>
    </location>
</feature>
<feature type="repeat" description="TPR 1">
    <location>
        <begin position="9"/>
        <end position="42"/>
    </location>
</feature>
<feature type="repeat" description="TPR 2">
    <location>
        <begin position="43"/>
        <end position="76"/>
    </location>
</feature>
<feature type="repeat" description="TPR 3">
    <location>
        <begin position="78"/>
        <end position="104"/>
    </location>
</feature>
<feature type="repeat" description="TPR 4">
    <location>
        <begin position="105"/>
        <end position="137"/>
    </location>
</feature>
<feature type="repeat" description="TPR 5">
    <location>
        <begin position="140"/>
        <end position="173"/>
    </location>
</feature>
<feature type="repeat" description="TPR 6">
    <location>
        <begin position="223"/>
        <end position="256"/>
    </location>
</feature>
<feature type="repeat" description="TPR 7">
    <location>
        <begin position="269"/>
        <end position="302"/>
    </location>
</feature>
<feature type="repeat" description="TPR 8">
    <location>
        <begin position="386"/>
        <end position="420"/>
    </location>
</feature>
<feature type="repeat" description="TPR 9">
    <location>
        <begin position="421"/>
        <end position="454"/>
    </location>
</feature>
<feature type="repeat" description="TPR 10">
    <location>
        <begin position="465"/>
        <end position="498"/>
    </location>
</feature>
<feature type="repeat" description="TPR 11">
    <location>
        <begin position="522"/>
        <end position="555"/>
    </location>
</feature>
<feature type="region of interest" description="Disordered" evidence="4">
    <location>
        <begin position="552"/>
        <end position="672"/>
    </location>
</feature>
<feature type="compositionally biased region" description="Low complexity" evidence="4">
    <location>
        <begin position="557"/>
        <end position="574"/>
    </location>
</feature>
<feature type="compositionally biased region" description="Basic residues" evidence="4">
    <location>
        <begin position="581"/>
        <end position="590"/>
    </location>
</feature>
<feature type="compositionally biased region" description="Polar residues" evidence="4">
    <location>
        <begin position="631"/>
        <end position="645"/>
    </location>
</feature>
<comment type="function">
    <text evidence="3">Component of the signal recognition particle (SRP) complex, a ribonucleoprotein complex that mediates the cotranslational targeting of secretory and membrane proteins to the endoplasmic reticulum (ER) (By similarity). Binds the 7SL RNA in presence of srp68 (By similarity). This ribonucleoprotein complex might interact directly with the docking protein in the ER membrane and possibly participates in the elongation arrest function (By similarity).</text>
</comment>
<comment type="subunit">
    <text evidence="3">Component of a signal recognition particle (SRP) complex that consists of a 7SL RNA molecule and six protein subunits: srp72, srp68, srp54, srp19, srp14 and srp9.</text>
</comment>
<comment type="subcellular location">
    <subcellularLocation>
        <location evidence="2">Cytoplasm</location>
    </subcellularLocation>
    <subcellularLocation>
        <location evidence="2">Endoplasmic reticulum</location>
    </subcellularLocation>
</comment>
<comment type="domain">
    <text evidence="1">The C-terminus is essential for the interaction with the srp68/7SL RNA complex.</text>
</comment>
<comment type="similarity">
    <text evidence="5">Belongs to the SRP72 family.</text>
</comment>
<evidence type="ECO:0000250" key="1"/>
<evidence type="ECO:0000250" key="2">
    <source>
        <dbReference type="UniProtKB" id="O76094"/>
    </source>
</evidence>
<evidence type="ECO:0000250" key="3">
    <source>
        <dbReference type="UniProtKB" id="P38688"/>
    </source>
</evidence>
<evidence type="ECO:0000256" key="4">
    <source>
        <dbReference type="SAM" id="MobiDB-lite"/>
    </source>
</evidence>
<evidence type="ECO:0000305" key="5"/>
<gene>
    <name type="primary">srp72</name>
    <name type="ORF">DDB_G0291412</name>
</gene>
<dbReference type="EMBL" id="AAFI02000177">
    <property type="protein sequence ID" value="EAL61690.1"/>
    <property type="molecule type" value="Genomic_DNA"/>
</dbReference>
<dbReference type="RefSeq" id="XP_635193.1">
    <property type="nucleotide sequence ID" value="XM_630101.1"/>
</dbReference>
<dbReference type="SMR" id="Q54EP7"/>
<dbReference type="FunCoup" id="Q54EP7">
    <property type="interactions" value="614"/>
</dbReference>
<dbReference type="STRING" id="44689.Q54EP7"/>
<dbReference type="PaxDb" id="44689-DDB0232384"/>
<dbReference type="EnsemblProtists" id="EAL61690">
    <property type="protein sequence ID" value="EAL61690"/>
    <property type="gene ID" value="DDB_G0291412"/>
</dbReference>
<dbReference type="GeneID" id="8628138"/>
<dbReference type="KEGG" id="ddi:DDB_G0291412"/>
<dbReference type="dictyBase" id="DDB_G0291412">
    <property type="gene designation" value="srp72"/>
</dbReference>
<dbReference type="VEuPathDB" id="AmoebaDB:DDB_G0291412"/>
<dbReference type="eggNOG" id="KOG2376">
    <property type="taxonomic scope" value="Eukaryota"/>
</dbReference>
<dbReference type="HOGENOM" id="CLU_013808_1_0_1"/>
<dbReference type="InParanoid" id="Q54EP7"/>
<dbReference type="OMA" id="NDMKVLA"/>
<dbReference type="PhylomeDB" id="Q54EP7"/>
<dbReference type="Reactome" id="R-DDI-1799339">
    <property type="pathway name" value="SRP-dependent cotranslational protein targeting to membrane"/>
</dbReference>
<dbReference type="PRO" id="PR:Q54EP7"/>
<dbReference type="Proteomes" id="UP000002195">
    <property type="component" value="Chromosome 6"/>
</dbReference>
<dbReference type="GO" id="GO:0005783">
    <property type="term" value="C:endoplasmic reticulum"/>
    <property type="evidence" value="ECO:0007669"/>
    <property type="project" value="UniProtKB-SubCell"/>
</dbReference>
<dbReference type="GO" id="GO:0005786">
    <property type="term" value="C:signal recognition particle, endoplasmic reticulum targeting"/>
    <property type="evidence" value="ECO:0000250"/>
    <property type="project" value="dictyBase"/>
</dbReference>
<dbReference type="GO" id="GO:0008312">
    <property type="term" value="F:7S RNA binding"/>
    <property type="evidence" value="ECO:0000318"/>
    <property type="project" value="GO_Central"/>
</dbReference>
<dbReference type="GO" id="GO:0005047">
    <property type="term" value="F:signal recognition particle binding"/>
    <property type="evidence" value="ECO:0000250"/>
    <property type="project" value="dictyBase"/>
</dbReference>
<dbReference type="GO" id="GO:0006614">
    <property type="term" value="P:SRP-dependent cotranslational protein targeting to membrane"/>
    <property type="evidence" value="ECO:0000318"/>
    <property type="project" value="GO_Central"/>
</dbReference>
<dbReference type="Gene3D" id="1.25.40.10">
    <property type="entry name" value="Tetratricopeptide repeat domain"/>
    <property type="match status" value="2"/>
</dbReference>
<dbReference type="InterPro" id="IPR013699">
    <property type="entry name" value="Signal_recog_part_SRP72_RNA-bd"/>
</dbReference>
<dbReference type="InterPro" id="IPR026270">
    <property type="entry name" value="SRP72"/>
</dbReference>
<dbReference type="InterPro" id="IPR031545">
    <property type="entry name" value="SRP72_TPR-like"/>
</dbReference>
<dbReference type="InterPro" id="IPR011990">
    <property type="entry name" value="TPR-like_helical_dom_sf"/>
</dbReference>
<dbReference type="InterPro" id="IPR019734">
    <property type="entry name" value="TPR_rpt"/>
</dbReference>
<dbReference type="PANTHER" id="PTHR14094">
    <property type="entry name" value="SIGNAL RECOGNITION PARTICLE 72"/>
    <property type="match status" value="1"/>
</dbReference>
<dbReference type="PANTHER" id="PTHR14094:SF9">
    <property type="entry name" value="SIGNAL RECOGNITION PARTICLE SUBUNIT SRP72"/>
    <property type="match status" value="1"/>
</dbReference>
<dbReference type="Pfam" id="PF08492">
    <property type="entry name" value="SRP72"/>
    <property type="match status" value="1"/>
</dbReference>
<dbReference type="Pfam" id="PF17004">
    <property type="entry name" value="SRP_TPR_like"/>
    <property type="match status" value="1"/>
</dbReference>
<dbReference type="PIRSF" id="PIRSF038922">
    <property type="entry name" value="SRP72"/>
    <property type="match status" value="1"/>
</dbReference>
<dbReference type="SMART" id="SM00028">
    <property type="entry name" value="TPR"/>
    <property type="match status" value="5"/>
</dbReference>
<dbReference type="SUPFAM" id="SSF48452">
    <property type="entry name" value="TPR-like"/>
    <property type="match status" value="2"/>
</dbReference>
<dbReference type="PROSITE" id="PS50005">
    <property type="entry name" value="TPR"/>
    <property type="match status" value="4"/>
</dbReference>
<dbReference type="PROSITE" id="PS50293">
    <property type="entry name" value="TPR_REGION"/>
    <property type="match status" value="2"/>
</dbReference>